<proteinExistence type="inferred from homology"/>
<keyword id="KW-0067">ATP-binding</keyword>
<keyword id="KW-0315">Glutamine amidotransferase</keyword>
<keyword id="KW-0436">Ligase</keyword>
<keyword id="KW-0460">Magnesium</keyword>
<keyword id="KW-0479">Metal-binding</keyword>
<keyword id="KW-0547">Nucleotide-binding</keyword>
<keyword id="KW-0665">Pyrimidine biosynthesis</keyword>
<reference key="1">
    <citation type="journal article" date="2009" name="Nat. Genet.">
        <title>Comparative genomic and phylogeographic analysis of Mycobacterium leprae.</title>
        <authorList>
            <person name="Monot M."/>
            <person name="Honore N."/>
            <person name="Garnier T."/>
            <person name="Zidane N."/>
            <person name="Sherafi D."/>
            <person name="Paniz-Mondolfi A."/>
            <person name="Matsuoka M."/>
            <person name="Taylor G.M."/>
            <person name="Donoghue H.D."/>
            <person name="Bouwman A."/>
            <person name="Mays S."/>
            <person name="Watson C."/>
            <person name="Lockwood D."/>
            <person name="Khamispour A."/>
            <person name="Dowlati Y."/>
            <person name="Jianping S."/>
            <person name="Rea T.H."/>
            <person name="Vera-Cabrera L."/>
            <person name="Stefani M.M."/>
            <person name="Banu S."/>
            <person name="Macdonald M."/>
            <person name="Sapkota B.R."/>
            <person name="Spencer J.S."/>
            <person name="Thomas J."/>
            <person name="Harshman K."/>
            <person name="Singh P."/>
            <person name="Busso P."/>
            <person name="Gattiker A."/>
            <person name="Rougemont J."/>
            <person name="Brennan P.J."/>
            <person name="Cole S.T."/>
        </authorList>
    </citation>
    <scope>NUCLEOTIDE SEQUENCE [LARGE SCALE GENOMIC DNA]</scope>
    <source>
        <strain>Br4923</strain>
    </source>
</reference>
<name>PYRG_MYCLB</name>
<gene>
    <name evidence="1" type="primary">pyrG</name>
    <name type="ordered locus">MLBr01363</name>
</gene>
<protein>
    <recommendedName>
        <fullName evidence="1">CTP synthase</fullName>
        <ecNumber evidence="1">6.3.4.2</ecNumber>
    </recommendedName>
    <alternativeName>
        <fullName evidence="1">Cytidine 5'-triphosphate synthase</fullName>
    </alternativeName>
    <alternativeName>
        <fullName evidence="1">Cytidine triphosphate synthetase</fullName>
        <shortName evidence="1">CTP synthetase</shortName>
        <shortName evidence="1">CTPS</shortName>
    </alternativeName>
    <alternativeName>
        <fullName evidence="1">UTP--ammonia ligase</fullName>
    </alternativeName>
</protein>
<accession>B8ZRH6</accession>
<feature type="chain" id="PRO_1000164953" description="CTP synthase">
    <location>
        <begin position="1"/>
        <end position="590"/>
    </location>
</feature>
<feature type="domain" description="Glutamine amidotransferase type-1" evidence="1">
    <location>
        <begin position="303"/>
        <end position="551"/>
    </location>
</feature>
<feature type="region of interest" description="Amidoligase domain" evidence="1">
    <location>
        <begin position="1"/>
        <end position="278"/>
    </location>
</feature>
<feature type="region of interest" description="Disordered" evidence="2">
    <location>
        <begin position="566"/>
        <end position="590"/>
    </location>
</feature>
<feature type="active site" description="Nucleophile; for glutamine hydrolysis" evidence="1">
    <location>
        <position position="393"/>
    </location>
</feature>
<feature type="active site" evidence="1">
    <location>
        <position position="524"/>
    </location>
</feature>
<feature type="active site" evidence="1">
    <location>
        <position position="526"/>
    </location>
</feature>
<feature type="binding site" evidence="1">
    <location>
        <position position="20"/>
    </location>
    <ligand>
        <name>CTP</name>
        <dbReference type="ChEBI" id="CHEBI:37563"/>
        <note>allosteric inhibitor</note>
    </ligand>
</feature>
<feature type="binding site" evidence="1">
    <location>
        <position position="20"/>
    </location>
    <ligand>
        <name>UTP</name>
        <dbReference type="ChEBI" id="CHEBI:46398"/>
    </ligand>
</feature>
<feature type="binding site" evidence="1">
    <location>
        <begin position="21"/>
        <end position="26"/>
    </location>
    <ligand>
        <name>ATP</name>
        <dbReference type="ChEBI" id="CHEBI:30616"/>
    </ligand>
</feature>
<feature type="binding site" evidence="1">
    <location>
        <position position="78"/>
    </location>
    <ligand>
        <name>ATP</name>
        <dbReference type="ChEBI" id="CHEBI:30616"/>
    </ligand>
</feature>
<feature type="binding site" evidence="1">
    <location>
        <position position="78"/>
    </location>
    <ligand>
        <name>Mg(2+)</name>
        <dbReference type="ChEBI" id="CHEBI:18420"/>
    </ligand>
</feature>
<feature type="binding site" evidence="1">
    <location>
        <position position="152"/>
    </location>
    <ligand>
        <name>Mg(2+)</name>
        <dbReference type="ChEBI" id="CHEBI:18420"/>
    </ligand>
</feature>
<feature type="binding site" evidence="1">
    <location>
        <begin position="159"/>
        <end position="161"/>
    </location>
    <ligand>
        <name>CTP</name>
        <dbReference type="ChEBI" id="CHEBI:37563"/>
        <note>allosteric inhibitor</note>
    </ligand>
</feature>
<feature type="binding site" evidence="1">
    <location>
        <begin position="199"/>
        <end position="204"/>
    </location>
    <ligand>
        <name>CTP</name>
        <dbReference type="ChEBI" id="CHEBI:37563"/>
        <note>allosteric inhibitor</note>
    </ligand>
</feature>
<feature type="binding site" evidence="1">
    <location>
        <begin position="199"/>
        <end position="204"/>
    </location>
    <ligand>
        <name>UTP</name>
        <dbReference type="ChEBI" id="CHEBI:46398"/>
    </ligand>
</feature>
<feature type="binding site" evidence="1">
    <location>
        <position position="235"/>
    </location>
    <ligand>
        <name>CTP</name>
        <dbReference type="ChEBI" id="CHEBI:37563"/>
        <note>allosteric inhibitor</note>
    </ligand>
</feature>
<feature type="binding site" evidence="1">
    <location>
        <position position="235"/>
    </location>
    <ligand>
        <name>UTP</name>
        <dbReference type="ChEBI" id="CHEBI:46398"/>
    </ligand>
</feature>
<feature type="binding site" evidence="1">
    <location>
        <position position="366"/>
    </location>
    <ligand>
        <name>L-glutamine</name>
        <dbReference type="ChEBI" id="CHEBI:58359"/>
    </ligand>
</feature>
<feature type="binding site" evidence="1">
    <location>
        <begin position="394"/>
        <end position="397"/>
    </location>
    <ligand>
        <name>L-glutamine</name>
        <dbReference type="ChEBI" id="CHEBI:58359"/>
    </ligand>
</feature>
<feature type="binding site" evidence="1">
    <location>
        <position position="416"/>
    </location>
    <ligand>
        <name>L-glutamine</name>
        <dbReference type="ChEBI" id="CHEBI:58359"/>
    </ligand>
</feature>
<feature type="binding site" evidence="1">
    <location>
        <position position="477"/>
    </location>
    <ligand>
        <name>L-glutamine</name>
        <dbReference type="ChEBI" id="CHEBI:58359"/>
    </ligand>
</feature>
<comment type="function">
    <text evidence="1">Catalyzes the ATP-dependent amination of UTP to CTP with either L-glutamine or ammonia as the source of nitrogen. Regulates intracellular CTP levels through interactions with the four ribonucleotide triphosphates.</text>
</comment>
<comment type="catalytic activity">
    <reaction evidence="1">
        <text>UTP + L-glutamine + ATP + H2O = CTP + L-glutamate + ADP + phosphate + 2 H(+)</text>
        <dbReference type="Rhea" id="RHEA:26426"/>
        <dbReference type="ChEBI" id="CHEBI:15377"/>
        <dbReference type="ChEBI" id="CHEBI:15378"/>
        <dbReference type="ChEBI" id="CHEBI:29985"/>
        <dbReference type="ChEBI" id="CHEBI:30616"/>
        <dbReference type="ChEBI" id="CHEBI:37563"/>
        <dbReference type="ChEBI" id="CHEBI:43474"/>
        <dbReference type="ChEBI" id="CHEBI:46398"/>
        <dbReference type="ChEBI" id="CHEBI:58359"/>
        <dbReference type="ChEBI" id="CHEBI:456216"/>
        <dbReference type="EC" id="6.3.4.2"/>
    </reaction>
</comment>
<comment type="catalytic activity">
    <reaction evidence="1">
        <text>L-glutamine + H2O = L-glutamate + NH4(+)</text>
        <dbReference type="Rhea" id="RHEA:15889"/>
        <dbReference type="ChEBI" id="CHEBI:15377"/>
        <dbReference type="ChEBI" id="CHEBI:28938"/>
        <dbReference type="ChEBI" id="CHEBI:29985"/>
        <dbReference type="ChEBI" id="CHEBI:58359"/>
    </reaction>
</comment>
<comment type="catalytic activity">
    <reaction evidence="1">
        <text>UTP + NH4(+) + ATP = CTP + ADP + phosphate + 2 H(+)</text>
        <dbReference type="Rhea" id="RHEA:16597"/>
        <dbReference type="ChEBI" id="CHEBI:15378"/>
        <dbReference type="ChEBI" id="CHEBI:28938"/>
        <dbReference type="ChEBI" id="CHEBI:30616"/>
        <dbReference type="ChEBI" id="CHEBI:37563"/>
        <dbReference type="ChEBI" id="CHEBI:43474"/>
        <dbReference type="ChEBI" id="CHEBI:46398"/>
        <dbReference type="ChEBI" id="CHEBI:456216"/>
    </reaction>
</comment>
<comment type="activity regulation">
    <text evidence="1">Allosterically activated by GTP, when glutamine is the substrate; GTP has no effect on the reaction when ammonia is the substrate. The allosteric effector GTP functions by stabilizing the protein conformation that binds the tetrahedral intermediate(s) formed during glutamine hydrolysis. Inhibited by the product CTP, via allosteric rather than competitive inhibition.</text>
</comment>
<comment type="pathway">
    <text evidence="1">Pyrimidine metabolism; CTP biosynthesis via de novo pathway; CTP from UDP: step 2/2.</text>
</comment>
<comment type="subunit">
    <text evidence="1">Homotetramer.</text>
</comment>
<comment type="miscellaneous">
    <text evidence="1">CTPSs have evolved a hybrid strategy for distinguishing between UTP and CTP. The overlapping regions of the product feedback inhibitory and substrate sites recognize a common feature in both compounds, the triphosphate moiety. To differentiate isosteric substrate and product pyrimidine rings, an additional pocket far from the expected kinase/ligase catalytic site, specifically recognizes the cytosine and ribose portions of the product inhibitor.</text>
</comment>
<comment type="similarity">
    <text evidence="1">Belongs to the CTP synthase family.</text>
</comment>
<sequence>MRKHPQSATKHLFVSGGVASSLGKGLTASSLGQLLTARGLHVTMQKLDPYLNVDPGTMNPFQHGEVFVTEDGAETDLDVGHYERFLDRDLSGSANVTTGQVYSTVIAKERRGEYLGDTVQVIPHITDEIKQRIMAMAQPDGGDNRPDVVITEIGGTVGDIESQPFLEAARQVRHDLGRENVFFLHVSLVPHLAPSGELKTKPTQHSVAALRSIGITPDALILRCDRDVPESLKNKIALMCDVDIDGVISTPDAPSIYDIPKVLHREELDAFVVRRLNLPFRDVDWTEWDDLLRRVHEPHGTVRIALVGKYVDFSDAYLSVSEALHAGGFKHYAKVEVVWVASDDCETATGAAAVLADVHGVLIPGGFGIRGIEGKIGAIRYARARGLPVLGLCLGLQCIVIEATRSVGLVQANSAEFEPATPDPVISTMADQKEIVAGEADFGGTMRLGAYPAVLQPASIVAQAYGTTQVSERHRHRYEVNNAYRDWIAESGLRISGTSPDGYLVEFVEYPANMHPFVVGTQAHPELKSRPTRPHPLFVAFVGAAIDYKSAELLPVEIPAVPEISEHLPNSSNQHRDGVERSFPAPAARG</sequence>
<organism>
    <name type="scientific">Mycobacterium leprae (strain Br4923)</name>
    <dbReference type="NCBI Taxonomy" id="561304"/>
    <lineage>
        <taxon>Bacteria</taxon>
        <taxon>Bacillati</taxon>
        <taxon>Actinomycetota</taxon>
        <taxon>Actinomycetes</taxon>
        <taxon>Mycobacteriales</taxon>
        <taxon>Mycobacteriaceae</taxon>
        <taxon>Mycobacterium</taxon>
    </lineage>
</organism>
<evidence type="ECO:0000255" key="1">
    <source>
        <dbReference type="HAMAP-Rule" id="MF_01227"/>
    </source>
</evidence>
<evidence type="ECO:0000256" key="2">
    <source>
        <dbReference type="SAM" id="MobiDB-lite"/>
    </source>
</evidence>
<dbReference type="EC" id="6.3.4.2" evidence="1"/>
<dbReference type="EMBL" id="FM211192">
    <property type="protein sequence ID" value="CAR71458.1"/>
    <property type="molecule type" value="Genomic_DNA"/>
</dbReference>
<dbReference type="SMR" id="B8ZRH6"/>
<dbReference type="MEROPS" id="C26.964"/>
<dbReference type="KEGG" id="mlb:MLBr01363"/>
<dbReference type="HOGENOM" id="CLU_011675_5_0_11"/>
<dbReference type="UniPathway" id="UPA00159">
    <property type="reaction ID" value="UER00277"/>
</dbReference>
<dbReference type="Proteomes" id="UP000006900">
    <property type="component" value="Chromosome"/>
</dbReference>
<dbReference type="GO" id="GO:0005829">
    <property type="term" value="C:cytosol"/>
    <property type="evidence" value="ECO:0007669"/>
    <property type="project" value="TreeGrafter"/>
</dbReference>
<dbReference type="GO" id="GO:0005524">
    <property type="term" value="F:ATP binding"/>
    <property type="evidence" value="ECO:0007669"/>
    <property type="project" value="UniProtKB-KW"/>
</dbReference>
<dbReference type="GO" id="GO:0003883">
    <property type="term" value="F:CTP synthase activity"/>
    <property type="evidence" value="ECO:0007669"/>
    <property type="project" value="UniProtKB-UniRule"/>
</dbReference>
<dbReference type="GO" id="GO:0004359">
    <property type="term" value="F:glutaminase activity"/>
    <property type="evidence" value="ECO:0007669"/>
    <property type="project" value="RHEA"/>
</dbReference>
<dbReference type="GO" id="GO:0042802">
    <property type="term" value="F:identical protein binding"/>
    <property type="evidence" value="ECO:0007669"/>
    <property type="project" value="TreeGrafter"/>
</dbReference>
<dbReference type="GO" id="GO:0046872">
    <property type="term" value="F:metal ion binding"/>
    <property type="evidence" value="ECO:0007669"/>
    <property type="project" value="UniProtKB-KW"/>
</dbReference>
<dbReference type="GO" id="GO:0044210">
    <property type="term" value="P:'de novo' CTP biosynthetic process"/>
    <property type="evidence" value="ECO:0007669"/>
    <property type="project" value="UniProtKB-UniRule"/>
</dbReference>
<dbReference type="GO" id="GO:0019856">
    <property type="term" value="P:pyrimidine nucleobase biosynthetic process"/>
    <property type="evidence" value="ECO:0007669"/>
    <property type="project" value="TreeGrafter"/>
</dbReference>
<dbReference type="CDD" id="cd03113">
    <property type="entry name" value="CTPS_N"/>
    <property type="match status" value="1"/>
</dbReference>
<dbReference type="CDD" id="cd01746">
    <property type="entry name" value="GATase1_CTP_Synthase"/>
    <property type="match status" value="1"/>
</dbReference>
<dbReference type="FunFam" id="3.40.50.300:FF:000009">
    <property type="entry name" value="CTP synthase"/>
    <property type="match status" value="1"/>
</dbReference>
<dbReference type="FunFam" id="3.40.50.880:FF:000002">
    <property type="entry name" value="CTP synthase"/>
    <property type="match status" value="1"/>
</dbReference>
<dbReference type="Gene3D" id="3.40.50.880">
    <property type="match status" value="1"/>
</dbReference>
<dbReference type="Gene3D" id="3.40.50.300">
    <property type="entry name" value="P-loop containing nucleotide triphosphate hydrolases"/>
    <property type="match status" value="1"/>
</dbReference>
<dbReference type="HAMAP" id="MF_01227">
    <property type="entry name" value="PyrG"/>
    <property type="match status" value="1"/>
</dbReference>
<dbReference type="InterPro" id="IPR029062">
    <property type="entry name" value="Class_I_gatase-like"/>
</dbReference>
<dbReference type="InterPro" id="IPR004468">
    <property type="entry name" value="CTP_synthase"/>
</dbReference>
<dbReference type="InterPro" id="IPR017456">
    <property type="entry name" value="CTP_synthase_N"/>
</dbReference>
<dbReference type="InterPro" id="IPR017926">
    <property type="entry name" value="GATASE"/>
</dbReference>
<dbReference type="InterPro" id="IPR033828">
    <property type="entry name" value="GATase1_CTP_Synthase"/>
</dbReference>
<dbReference type="InterPro" id="IPR027417">
    <property type="entry name" value="P-loop_NTPase"/>
</dbReference>
<dbReference type="NCBIfam" id="NF003792">
    <property type="entry name" value="PRK05380.1"/>
    <property type="match status" value="1"/>
</dbReference>
<dbReference type="NCBIfam" id="TIGR00337">
    <property type="entry name" value="PyrG"/>
    <property type="match status" value="1"/>
</dbReference>
<dbReference type="PANTHER" id="PTHR11550">
    <property type="entry name" value="CTP SYNTHASE"/>
    <property type="match status" value="1"/>
</dbReference>
<dbReference type="PANTHER" id="PTHR11550:SF0">
    <property type="entry name" value="CTP SYNTHASE-RELATED"/>
    <property type="match status" value="1"/>
</dbReference>
<dbReference type="Pfam" id="PF06418">
    <property type="entry name" value="CTP_synth_N"/>
    <property type="match status" value="1"/>
</dbReference>
<dbReference type="Pfam" id="PF00117">
    <property type="entry name" value="GATase"/>
    <property type="match status" value="1"/>
</dbReference>
<dbReference type="SUPFAM" id="SSF52317">
    <property type="entry name" value="Class I glutamine amidotransferase-like"/>
    <property type="match status" value="1"/>
</dbReference>
<dbReference type="SUPFAM" id="SSF52540">
    <property type="entry name" value="P-loop containing nucleoside triphosphate hydrolases"/>
    <property type="match status" value="1"/>
</dbReference>
<dbReference type="PROSITE" id="PS51273">
    <property type="entry name" value="GATASE_TYPE_1"/>
    <property type="match status" value="1"/>
</dbReference>